<keyword id="KW-0067">ATP-binding</keyword>
<keyword id="KW-0963">Cytoplasm</keyword>
<keyword id="KW-0547">Nucleotide-binding</keyword>
<keyword id="KW-0539">Nucleus</keyword>
<keyword id="KW-1185">Reference proteome</keyword>
<keyword id="KW-0804">Transcription</keyword>
<keyword id="KW-0805">Transcription regulation</keyword>
<keyword id="KW-0819">tRNA processing</keyword>
<accession>Q9LMH0</accession>
<accession>Q8H2D4</accession>
<proteinExistence type="evidence at protein level"/>
<comment type="function">
    <text evidence="1 5 6 7 8 9 10">Elongator complex-associated factor that is not a structural subunit but rather transiently contacts the complex (PubMed:25518926). Regulates both meristem activity and organ growth; acts as a positive regulator of adaxial leaf patterning by modulating both cell division and differentiation (PubMed:11589569, PubMed:12615938, PubMed:15894610, PubMed:25518926, PubMed:8392411). Required for an early step in synthesis of 5-carbamoylmethyl (ncm5) groups present on uridines (ncm5U) at the wobble position in tRNA (PubMed:20836892).</text>
</comment>
<comment type="subunit">
    <text evidence="1 6">Interacts with the elongator complex (By similarity). Binds to calmodulin in a calcium-dependent manner (PubMed:12615938).</text>
</comment>
<comment type="subcellular location">
    <subcellularLocation>
        <location evidence="1">Cytoplasm</location>
    </subcellularLocation>
    <subcellularLocation>
        <location evidence="1">Nucleus</location>
    </subcellularLocation>
</comment>
<comment type="tissue specificity">
    <text evidence="6">Expressed in roots, hypocotyls, cotyledons, shoot apices, stems, inflorescence apices, leaves and flowers.</text>
</comment>
<comment type="developmental stage">
    <text evidence="6">Detected in globular-, heart-, and torpedo-stage embryos, in the outer integuments of ovules and in the funiculi. Also expressed in the peripheral zone of the shoot apical meristem (SAM) corresponding to the central zone. In elongating tissues, restricted at the periphery of the vascular bundle. In shoot and inflorescence apices, mostly present in the L2 layer, and, at lower levels, in the L1 layer, but absent of the L3 layer. In young leaf primordia, localized in the basal part of the dorsal side. In older leaf primordia, detected in vascular bundles and in the mesophyll between the vascular bundles. In expanding leaves, confined to stomatal guard cells, and individual palisade and spongy mesophyll parenchyma cells. In general, present around the vascular bundles. Expressed in young flower organs but not in mature sepals and petals. Gradient accumulation in the stamens and carpels, with the highest activity at the tip of the organs. Present in the meristematic and elongation zones of the primary root and in the vascular bundle of the differentiation zone.</text>
</comment>
<comment type="disruption phenotype">
    <text evidence="4 5 6 7 8 9 10">Defective organ formation due to disorganized shoot, inflorescence, flower, and root meristems leading to stunted roots, few root hairs, lanceolate leaves, and a highly enlarged, disorganized shoot apex that does not produce an inflorescence (PubMed:10353913, PubMed:11589569, PubMed:12615938, PubMed:15894610, PubMed:25518926, PubMed:8392411). Altered cell division and cell differentiation in leaves (PubMed:25518926). No detectable 5-carbamoylmethyluridine (ncm5U) modified nucleosides (PubMed:20836892).</text>
</comment>
<comment type="similarity">
    <text evidence="14">Belongs to the KTI12 family.</text>
</comment>
<sequence length="302" mass="34064">MALVVICGQPCSGKSIAAVTLAETLKESETKQSVRIIDEASFHLDRNQNYANMPAEKNLRGKLRSDVDRSVSTGEIVIVDSLNSIKGYRYELWCIARAAGIRYCVVYCDVDEAHCRQWNKERSDRGEDGYDDGIFEDLVRRFEKPERRNRWDSPLFELYPSREVIDKSSPVILEAVTYLTKTVDSKTQDVRILQPSIATQAARFSEANSLYELDRATQEIINAIVEQQSLGAAISRVTLGNELPPIEICRPIGLPELRRLRRTFVKLMGQSSLSGPPLPTDADSAKRRFVDYLNREFGGNNA</sequence>
<gene>
    <name evidence="12" type="primary">KTI12</name>
    <name evidence="13" type="synonym">DRL1</name>
    <name evidence="11" type="synonym">ELO4</name>
    <name evidence="15" type="ordered locus">At1g13870</name>
    <name evidence="16" type="ORF">F16A14.8</name>
</gene>
<evidence type="ECO:0000250" key="1">
    <source>
        <dbReference type="UniProtKB" id="P34253"/>
    </source>
</evidence>
<evidence type="ECO:0000255" key="2"/>
<evidence type="ECO:0000255" key="3">
    <source>
        <dbReference type="PROSITE-ProRule" id="PRU00499"/>
    </source>
</evidence>
<evidence type="ECO:0000269" key="4">
    <source>
    </source>
</evidence>
<evidence type="ECO:0000269" key="5">
    <source>
    </source>
</evidence>
<evidence type="ECO:0000269" key="6">
    <source>
    </source>
</evidence>
<evidence type="ECO:0000269" key="7">
    <source>
    </source>
</evidence>
<evidence type="ECO:0000269" key="8">
    <source>
    </source>
</evidence>
<evidence type="ECO:0000269" key="9">
    <source>
    </source>
</evidence>
<evidence type="ECO:0000269" key="10">
    <source>
    </source>
</evidence>
<evidence type="ECO:0000303" key="11">
    <source>
    </source>
</evidence>
<evidence type="ECO:0000303" key="12">
    <source>
    </source>
</evidence>
<evidence type="ECO:0000303" key="13">
    <source>
    </source>
</evidence>
<evidence type="ECO:0000305" key="14"/>
<evidence type="ECO:0000312" key="15">
    <source>
        <dbReference type="Araport" id="AT1G13870"/>
    </source>
</evidence>
<evidence type="ECO:0000312" key="16">
    <source>
        <dbReference type="EMBL" id="AAF79415.1"/>
    </source>
</evidence>
<evidence type="ECO:0000312" key="17">
    <source>
        <dbReference type="Proteomes" id="UP000006548"/>
    </source>
</evidence>
<dbReference type="EMBL" id="AJ428870">
    <property type="protein sequence ID" value="CAD21832.1"/>
    <property type="molecule type" value="Genomic_DNA"/>
</dbReference>
<dbReference type="EMBL" id="AC068197">
    <property type="protein sequence ID" value="AAF79415.1"/>
    <property type="molecule type" value="Genomic_DNA"/>
</dbReference>
<dbReference type="EMBL" id="CP002684">
    <property type="protein sequence ID" value="AEE29078.1"/>
    <property type="molecule type" value="Genomic_DNA"/>
</dbReference>
<dbReference type="EMBL" id="BT004091">
    <property type="protein sequence ID" value="AAO42118.1"/>
    <property type="molecule type" value="mRNA"/>
</dbReference>
<dbReference type="EMBL" id="BT005095">
    <property type="protein sequence ID" value="AAO50628.1"/>
    <property type="molecule type" value="mRNA"/>
</dbReference>
<dbReference type="PIR" id="H86271">
    <property type="entry name" value="H86271"/>
</dbReference>
<dbReference type="RefSeq" id="NP_172840.1">
    <property type="nucleotide sequence ID" value="NM_101253.3"/>
</dbReference>
<dbReference type="SMR" id="Q9LMH0"/>
<dbReference type="FunCoup" id="Q9LMH0">
    <property type="interactions" value="3359"/>
</dbReference>
<dbReference type="STRING" id="3702.Q9LMH0"/>
<dbReference type="GlyGen" id="Q9LMH0">
    <property type="glycosylation" value="1 site"/>
</dbReference>
<dbReference type="iPTMnet" id="Q9LMH0"/>
<dbReference type="PaxDb" id="3702-AT1G13870.1"/>
<dbReference type="ProteomicsDB" id="237117"/>
<dbReference type="EnsemblPlants" id="AT1G13870.1">
    <property type="protein sequence ID" value="AT1G13870.1"/>
    <property type="gene ID" value="AT1G13870"/>
</dbReference>
<dbReference type="GeneID" id="837946"/>
<dbReference type="Gramene" id="AT1G13870.1">
    <property type="protein sequence ID" value="AT1G13870.1"/>
    <property type="gene ID" value="AT1G13870"/>
</dbReference>
<dbReference type="KEGG" id="ath:AT1G13870"/>
<dbReference type="Araport" id="AT1G13870"/>
<dbReference type="TAIR" id="AT1G13870">
    <property type="gene designation" value="DRL1"/>
</dbReference>
<dbReference type="eggNOG" id="KOG3062">
    <property type="taxonomic scope" value="Eukaryota"/>
</dbReference>
<dbReference type="HOGENOM" id="CLU_027147_1_0_1"/>
<dbReference type="InParanoid" id="Q9LMH0"/>
<dbReference type="OMA" id="THSRWDK"/>
<dbReference type="PhylomeDB" id="Q9LMH0"/>
<dbReference type="PRO" id="PR:Q9LMH0"/>
<dbReference type="Proteomes" id="UP000006548">
    <property type="component" value="Chromosome 1"/>
</dbReference>
<dbReference type="ExpressionAtlas" id="Q9LMH0">
    <property type="expression patterns" value="baseline and differential"/>
</dbReference>
<dbReference type="GO" id="GO:0005737">
    <property type="term" value="C:cytoplasm"/>
    <property type="evidence" value="ECO:0007669"/>
    <property type="project" value="UniProtKB-SubCell"/>
</dbReference>
<dbReference type="GO" id="GO:0033588">
    <property type="term" value="C:elongator holoenzyme complex"/>
    <property type="evidence" value="ECO:0000314"/>
    <property type="project" value="UniProtKB"/>
</dbReference>
<dbReference type="GO" id="GO:0005634">
    <property type="term" value="C:nucleus"/>
    <property type="evidence" value="ECO:0007669"/>
    <property type="project" value="UniProtKB-SubCell"/>
</dbReference>
<dbReference type="GO" id="GO:0005524">
    <property type="term" value="F:ATP binding"/>
    <property type="evidence" value="ECO:0007669"/>
    <property type="project" value="UniProtKB-KW"/>
</dbReference>
<dbReference type="GO" id="GO:0005516">
    <property type="term" value="F:calmodulin binding"/>
    <property type="evidence" value="ECO:0000314"/>
    <property type="project" value="TAIR"/>
</dbReference>
<dbReference type="GO" id="GO:0080178">
    <property type="term" value="P:5-carbamoylmethyl uridine residue modification"/>
    <property type="evidence" value="ECO:0000315"/>
    <property type="project" value="TAIR"/>
</dbReference>
<dbReference type="GO" id="GO:0048366">
    <property type="term" value="P:leaf development"/>
    <property type="evidence" value="ECO:0000315"/>
    <property type="project" value="TAIR"/>
</dbReference>
<dbReference type="GO" id="GO:0009933">
    <property type="term" value="P:meristem structural organization"/>
    <property type="evidence" value="ECO:0000315"/>
    <property type="project" value="TAIR"/>
</dbReference>
<dbReference type="GO" id="GO:0006357">
    <property type="term" value="P:regulation of transcription by RNA polymerase II"/>
    <property type="evidence" value="ECO:0000314"/>
    <property type="project" value="UniProtKB"/>
</dbReference>
<dbReference type="GO" id="GO:0010449">
    <property type="term" value="P:root meristem growth"/>
    <property type="evidence" value="ECO:0000315"/>
    <property type="project" value="CACAO"/>
</dbReference>
<dbReference type="GO" id="GO:0006400">
    <property type="term" value="P:tRNA modification"/>
    <property type="evidence" value="ECO:0000314"/>
    <property type="project" value="UniProtKB"/>
</dbReference>
<dbReference type="GO" id="GO:0002098">
    <property type="term" value="P:tRNA wobble uridine modification"/>
    <property type="evidence" value="ECO:0000315"/>
    <property type="project" value="UniProtKB"/>
</dbReference>
<dbReference type="FunFam" id="3.40.50.300:FF:000827">
    <property type="entry name" value="KTI12 chromatin-associated homolog"/>
    <property type="match status" value="1"/>
</dbReference>
<dbReference type="Gene3D" id="3.40.50.300">
    <property type="entry name" value="P-loop containing nucleotide triphosphate hydrolases"/>
    <property type="match status" value="1"/>
</dbReference>
<dbReference type="InterPro" id="IPR013641">
    <property type="entry name" value="KTI12/PSTK"/>
</dbReference>
<dbReference type="InterPro" id="IPR027417">
    <property type="entry name" value="P-loop_NTPase"/>
</dbReference>
<dbReference type="PANTHER" id="PTHR12435">
    <property type="match status" value="1"/>
</dbReference>
<dbReference type="Pfam" id="PF08433">
    <property type="entry name" value="KTI12"/>
    <property type="match status" value="1"/>
</dbReference>
<dbReference type="SUPFAM" id="SSF52540">
    <property type="entry name" value="P-loop containing nucleoside triphosphate hydrolases"/>
    <property type="match status" value="1"/>
</dbReference>
<organism evidence="17">
    <name type="scientific">Arabidopsis thaliana</name>
    <name type="common">Mouse-ear cress</name>
    <dbReference type="NCBI Taxonomy" id="3702"/>
    <lineage>
        <taxon>Eukaryota</taxon>
        <taxon>Viridiplantae</taxon>
        <taxon>Streptophyta</taxon>
        <taxon>Embryophyta</taxon>
        <taxon>Tracheophyta</taxon>
        <taxon>Spermatophyta</taxon>
        <taxon>Magnoliopsida</taxon>
        <taxon>eudicotyledons</taxon>
        <taxon>Gunneridae</taxon>
        <taxon>Pentapetalae</taxon>
        <taxon>rosids</taxon>
        <taxon>malvids</taxon>
        <taxon>Brassicales</taxon>
        <taxon>Brassicaceae</taxon>
        <taxon>Camelineae</taxon>
        <taxon>Arabidopsis</taxon>
    </lineage>
</organism>
<protein>
    <recommendedName>
        <fullName evidence="12">Protein KTI12 homolog</fullName>
        <shortName evidence="12">AtKTI12</shortName>
    </recommendedName>
    <alternativeName>
        <fullName>At1g13870</fullName>
    </alternativeName>
    <alternativeName>
        <fullName evidence="13">Protein DEFORMED ROOTS AND LEAVES 1</fullName>
        <shortName evidence="13">AtDRL1</shortName>
    </alternativeName>
    <alternativeName>
        <fullName evidence="11">Protein ELONGATA4</fullName>
    </alternativeName>
</protein>
<feature type="chain" id="PRO_0000432190" description="Protein KTI12 homolog">
    <location>
        <begin position="1"/>
        <end position="302"/>
    </location>
</feature>
<feature type="region of interest" description="Calmodulin-binding" evidence="2">
    <location>
        <begin position="260"/>
        <end position="273"/>
    </location>
</feature>
<feature type="binding site" evidence="3">
    <location>
        <begin position="8"/>
        <end position="15"/>
    </location>
    <ligand>
        <name>ATP</name>
        <dbReference type="ChEBI" id="CHEBI:30616"/>
    </ligand>
</feature>
<feature type="sequence conflict" description="In Ref. 1; CAD21832." evidence="14" ref="1">
    <original>A</original>
    <variation>G</variation>
    <location>
        <position position="232"/>
    </location>
</feature>
<reference key="1">
    <citation type="journal article" date="2003" name="Plant Cell">
        <title>DRL1, a homolog of the yeast TOT4/KTI12 protein, has a function in meristem activity and organ growth in plants.</title>
        <authorList>
            <person name="Nelissen H."/>
            <person name="Clarke J.H."/>
            <person name="De Block M."/>
            <person name="De Block S."/>
            <person name="Vanderhaeghen R."/>
            <person name="Zielinski R.E."/>
            <person name="Dyer T."/>
            <person name="Lust S."/>
            <person name="Inze D."/>
            <person name="Van Lijsebettens M."/>
        </authorList>
    </citation>
    <scope>NUCLEOTIDE SEQUENCE [GENOMIC DNA]</scope>
    <scope>FUNCTION</scope>
    <scope>DISRUPTION PHENOTYPE</scope>
    <scope>INTERACTION WITH CALMODULIN</scope>
    <scope>TISSUE SPECIFICITY</scope>
    <scope>DEVELOPMENTAL STAGE</scope>
    <source>
        <strain>cv. Landsberg erecta</strain>
    </source>
</reference>
<reference key="2">
    <citation type="journal article" date="2000" name="Nature">
        <title>Sequence and analysis of chromosome 1 of the plant Arabidopsis thaliana.</title>
        <authorList>
            <person name="Theologis A."/>
            <person name="Ecker J.R."/>
            <person name="Palm C.J."/>
            <person name="Federspiel N.A."/>
            <person name="Kaul S."/>
            <person name="White O."/>
            <person name="Alonso J."/>
            <person name="Altafi H."/>
            <person name="Araujo R."/>
            <person name="Bowman C.L."/>
            <person name="Brooks S.Y."/>
            <person name="Buehler E."/>
            <person name="Chan A."/>
            <person name="Chao Q."/>
            <person name="Chen H."/>
            <person name="Cheuk R.F."/>
            <person name="Chin C.W."/>
            <person name="Chung M.K."/>
            <person name="Conn L."/>
            <person name="Conway A.B."/>
            <person name="Conway A.R."/>
            <person name="Creasy T.H."/>
            <person name="Dewar K."/>
            <person name="Dunn P."/>
            <person name="Etgu P."/>
            <person name="Feldblyum T.V."/>
            <person name="Feng J.-D."/>
            <person name="Fong B."/>
            <person name="Fujii C.Y."/>
            <person name="Gill J.E."/>
            <person name="Goldsmith A.D."/>
            <person name="Haas B."/>
            <person name="Hansen N.F."/>
            <person name="Hughes B."/>
            <person name="Huizar L."/>
            <person name="Hunter J.L."/>
            <person name="Jenkins J."/>
            <person name="Johnson-Hopson C."/>
            <person name="Khan S."/>
            <person name="Khaykin E."/>
            <person name="Kim C.J."/>
            <person name="Koo H.L."/>
            <person name="Kremenetskaia I."/>
            <person name="Kurtz D.B."/>
            <person name="Kwan A."/>
            <person name="Lam B."/>
            <person name="Langin-Hooper S."/>
            <person name="Lee A."/>
            <person name="Lee J.M."/>
            <person name="Lenz C.A."/>
            <person name="Li J.H."/>
            <person name="Li Y.-P."/>
            <person name="Lin X."/>
            <person name="Liu S.X."/>
            <person name="Liu Z.A."/>
            <person name="Luros J.S."/>
            <person name="Maiti R."/>
            <person name="Marziali A."/>
            <person name="Militscher J."/>
            <person name="Miranda M."/>
            <person name="Nguyen M."/>
            <person name="Nierman W.C."/>
            <person name="Osborne B.I."/>
            <person name="Pai G."/>
            <person name="Peterson J."/>
            <person name="Pham P.K."/>
            <person name="Rizzo M."/>
            <person name="Rooney T."/>
            <person name="Rowley D."/>
            <person name="Sakano H."/>
            <person name="Salzberg S.L."/>
            <person name="Schwartz J.R."/>
            <person name="Shinn P."/>
            <person name="Southwick A.M."/>
            <person name="Sun H."/>
            <person name="Tallon L.J."/>
            <person name="Tambunga G."/>
            <person name="Toriumi M.J."/>
            <person name="Town C.D."/>
            <person name="Utterback T."/>
            <person name="Van Aken S."/>
            <person name="Vaysberg M."/>
            <person name="Vysotskaia V.S."/>
            <person name="Walker M."/>
            <person name="Wu D."/>
            <person name="Yu G."/>
            <person name="Fraser C.M."/>
            <person name="Venter J.C."/>
            <person name="Davis R.W."/>
        </authorList>
    </citation>
    <scope>NUCLEOTIDE SEQUENCE [LARGE SCALE GENOMIC DNA]</scope>
    <source>
        <strain>cv. Columbia</strain>
    </source>
</reference>
<reference key="3">
    <citation type="journal article" date="2017" name="Plant J.">
        <title>Araport11: a complete reannotation of the Arabidopsis thaliana reference genome.</title>
        <authorList>
            <person name="Cheng C.Y."/>
            <person name="Krishnakumar V."/>
            <person name="Chan A.P."/>
            <person name="Thibaud-Nissen F."/>
            <person name="Schobel S."/>
            <person name="Town C.D."/>
        </authorList>
    </citation>
    <scope>GENOME REANNOTATION</scope>
    <source>
        <strain>cv. Columbia</strain>
    </source>
</reference>
<reference key="4">
    <citation type="journal article" date="2003" name="Science">
        <title>Empirical analysis of transcriptional activity in the Arabidopsis genome.</title>
        <authorList>
            <person name="Yamada K."/>
            <person name="Lim J."/>
            <person name="Dale J.M."/>
            <person name="Chen H."/>
            <person name="Shinn P."/>
            <person name="Palm C.J."/>
            <person name="Southwick A.M."/>
            <person name="Wu H.C."/>
            <person name="Kim C.J."/>
            <person name="Nguyen M."/>
            <person name="Pham P.K."/>
            <person name="Cheuk R.F."/>
            <person name="Karlin-Newmann G."/>
            <person name="Liu S.X."/>
            <person name="Lam B."/>
            <person name="Sakano H."/>
            <person name="Wu T."/>
            <person name="Yu G."/>
            <person name="Miranda M."/>
            <person name="Quach H.L."/>
            <person name="Tripp M."/>
            <person name="Chang C.H."/>
            <person name="Lee J.M."/>
            <person name="Toriumi M.J."/>
            <person name="Chan M.M."/>
            <person name="Tang C.C."/>
            <person name="Onodera C.S."/>
            <person name="Deng J.M."/>
            <person name="Akiyama K."/>
            <person name="Ansari Y."/>
            <person name="Arakawa T."/>
            <person name="Banh J."/>
            <person name="Banno F."/>
            <person name="Bowser L."/>
            <person name="Brooks S.Y."/>
            <person name="Carninci P."/>
            <person name="Chao Q."/>
            <person name="Choy N."/>
            <person name="Enju A."/>
            <person name="Goldsmith A.D."/>
            <person name="Gurjal M."/>
            <person name="Hansen N.F."/>
            <person name="Hayashizaki Y."/>
            <person name="Johnson-Hopson C."/>
            <person name="Hsuan V.W."/>
            <person name="Iida K."/>
            <person name="Karnes M."/>
            <person name="Khan S."/>
            <person name="Koesema E."/>
            <person name="Ishida J."/>
            <person name="Jiang P.X."/>
            <person name="Jones T."/>
            <person name="Kawai J."/>
            <person name="Kamiya A."/>
            <person name="Meyers C."/>
            <person name="Nakajima M."/>
            <person name="Narusaka M."/>
            <person name="Seki M."/>
            <person name="Sakurai T."/>
            <person name="Satou M."/>
            <person name="Tamse R."/>
            <person name="Vaysberg M."/>
            <person name="Wallender E.K."/>
            <person name="Wong C."/>
            <person name="Yamamura Y."/>
            <person name="Yuan S."/>
            <person name="Shinozaki K."/>
            <person name="Davis R.W."/>
            <person name="Theologis A."/>
            <person name="Ecker J.R."/>
        </authorList>
    </citation>
    <scope>NUCLEOTIDE SEQUENCE [LARGE SCALE MRNA]</scope>
    <source>
        <strain>cv. Columbia</strain>
    </source>
</reference>
<reference key="5">
    <citation type="journal article" date="1993" name="Plant Cell">
        <title>Heterologous transposon tagging of the DRL1 locus in Arabidopsis.</title>
        <authorList>
            <person name="Bancroft I."/>
            <person name="Jones J.D.G."/>
            <person name="Dean C."/>
        </authorList>
    </citation>
    <scope>FUNCTION</scope>
    <scope>DISRUPTION PHENOTYPE</scope>
    <source>
        <strain>cv. Landsberg erecta</strain>
    </source>
</reference>
<reference key="6">
    <citation type="journal article" date="1999" name="Genetics">
        <title>A mutational analysis of leaf morphogenesis in Arabidopsis thaliana.</title>
        <authorList>
            <person name="Berna G."/>
            <person name="Robles P."/>
            <person name="Micol J.L."/>
        </authorList>
    </citation>
    <scope>DISRUPTION PHENOTYPE</scope>
    <source>
        <strain>cv. Landsberg erecta</strain>
    </source>
</reference>
<reference key="7">
    <citation type="journal article" date="2001" name="Mol. Genet. Genomics">
        <title>Genome-wide linkage analysis of Arabidopsis genes required for leaf development.</title>
        <authorList>
            <person name="Robles P."/>
            <person name="Micol J.L."/>
        </authorList>
    </citation>
    <scope>FUNCTION</scope>
    <scope>DISRUPTION PHENOTYPE</scope>
    <source>
        <strain>cv. Landsberg erecta</strain>
    </source>
</reference>
<reference key="8">
    <citation type="journal article" date="2005" name="Proc. Natl. Acad. Sci. U.S.A.">
        <title>The elongata mutants identify a functional Elongator complex in plants with a role in cell proliferation during organ growth.</title>
        <authorList>
            <person name="Nelissen H."/>
            <person name="Fleury D."/>
            <person name="Bruno L."/>
            <person name="Robles P."/>
            <person name="de Veylder L."/>
            <person name="Traas J."/>
            <person name="Micol J."/>
            <person name="Van Montagu M."/>
            <person name="Inze D."/>
            <person name="Van Lijsebettens M."/>
        </authorList>
    </citation>
    <scope>FUNCTION</scope>
    <scope>DISRUPTION PHENOTYPE</scope>
    <source>
        <strain>cv. Landsberg erecta</strain>
    </source>
</reference>
<reference key="9">
    <citation type="journal article" date="2010" name="BMC Plant Biol.">
        <title>Transfer RNA modifications and genes for modifying enzymes in Arabidopsis thaliana.</title>
        <authorList>
            <person name="Chen P."/>
            <person name="Jaeger G."/>
            <person name="Zheng B."/>
        </authorList>
    </citation>
    <scope>FUNCTION</scope>
    <scope>DISRUPTION PHENOTYPE</scope>
</reference>
<reference key="10">
    <citation type="journal article" date="2015" name="Mol. Cells">
        <title>Comparative analysis of the conserved functions of Arabidopsis DRL1 and yeast KTI12.</title>
        <authorList>
            <person name="Jun S.E."/>
            <person name="Cho K.-H."/>
            <person name="Hwang J.-Y."/>
            <person name="Abdel-Fattah W."/>
            <person name="Hammermeister A."/>
            <person name="Schaffrath R."/>
            <person name="Bowman J.L."/>
            <person name="Kim G.-T."/>
        </authorList>
    </citation>
    <scope>FUNCTION</scope>
    <scope>DISRUPTION PHENOTYPE</scope>
</reference>
<name>KTI12_ARATH</name>